<reference key="1">
    <citation type="submission" date="2004-11" db="EMBL/GenBank/DDBJ databases">
        <authorList>
            <consortium name="The German cDNA consortium"/>
        </authorList>
    </citation>
    <scope>NUCLEOTIDE SEQUENCE [LARGE SCALE MRNA]</scope>
    <source>
        <tissue>Kidney</tissue>
    </source>
</reference>
<organism>
    <name type="scientific">Pongo abelii</name>
    <name type="common">Sumatran orangutan</name>
    <name type="synonym">Pongo pygmaeus abelii</name>
    <dbReference type="NCBI Taxonomy" id="9601"/>
    <lineage>
        <taxon>Eukaryota</taxon>
        <taxon>Metazoa</taxon>
        <taxon>Chordata</taxon>
        <taxon>Craniata</taxon>
        <taxon>Vertebrata</taxon>
        <taxon>Euteleostomi</taxon>
        <taxon>Mammalia</taxon>
        <taxon>Eutheria</taxon>
        <taxon>Euarchontoglires</taxon>
        <taxon>Primates</taxon>
        <taxon>Haplorrhini</taxon>
        <taxon>Catarrhini</taxon>
        <taxon>Hominidae</taxon>
        <taxon>Pongo</taxon>
    </lineage>
</organism>
<accession>Q5RDY3</accession>
<gene>
    <name type="primary">KBTBD2</name>
</gene>
<feature type="chain" id="PRO_0000261590" description="Kelch repeat and BTB domain-containing protein 2">
    <location>
        <begin position="1"/>
        <end position="623"/>
    </location>
</feature>
<feature type="domain" description="BTB" evidence="4">
    <location>
        <begin position="31"/>
        <end position="98"/>
    </location>
</feature>
<feature type="domain" description="BACK" evidence="3">
    <location>
        <begin position="133"/>
        <end position="229"/>
    </location>
</feature>
<feature type="repeat" description="Kelch 1" evidence="3">
    <location>
        <begin position="317"/>
        <end position="380"/>
    </location>
</feature>
<feature type="repeat" description="Kelch 2" evidence="3">
    <location>
        <begin position="381"/>
        <end position="429"/>
    </location>
</feature>
<feature type="repeat" description="Kelch 3" evidence="3">
    <location>
        <begin position="431"/>
        <end position="469"/>
    </location>
</feature>
<feature type="repeat" description="Kelch 4" evidence="3">
    <location>
        <begin position="470"/>
        <end position="529"/>
    </location>
</feature>
<feature type="repeat" description="Kelch 5" evidence="3">
    <location>
        <begin position="535"/>
        <end position="581"/>
    </location>
</feature>
<feature type="modified residue" description="Phosphoserine" evidence="2">
    <location>
        <position position="300"/>
    </location>
</feature>
<sequence length="623" mass="71291">MSTQDERQINTEYAVSLLEQLKQFYEQQLFTDIVLIVEGTEFPCHKMVLATCSSYFRAMFMSGLSESKQTHVHLRNVDAATLQIIITYAYTGNLAMNDSTVEQLYETACFLQVEDVLQRCREYLIKKINAENCVRLLSFADLFSCEELKQSAKRMVEHKFTAVYHQDAFMQLSHDLLIDILSSDNLNVEKEETVREAAMLWLEYNTESRSQYLSSVLSQIRIDALSEVTQRAWFQGLPPNDKSVVAQGLYKSMPKFFKPRLGMTKEEMMIFIEASSENPCSLYSSVCYSPQAEKVYKLCSPPADLHKVGTVVTPDNDIYIAGGQVPLKNTKTNHSKTSKLQTAFRTVNCFYWFDAQQNTWFPKTPMLFVRIKPSLVCCEGHIYAIGGDSVGGELNRRTVERYDTEKDEWTMVSPLPCAWQWSAAVVVHDCIYVMTLNLMYCYFPRSDSWVEMAMRQTSRSFASAAAFGDKIFYIGGLHIATNSGIRLPSGTVDGSSVTVEIYDVNKNEWKMAANIPAKRYSDPCVRAVVISNSLCVFMRETHLNERAKYVTYQYDLELDRWSLRQHISERVLWDLGRDFRCTVGKLYPSCLEESPWKPPTYLFSTDGTEEFELDGEMVALPPV</sequence>
<name>KBTB2_PONAB</name>
<dbReference type="EMBL" id="CR857759">
    <property type="protein sequence ID" value="CAH90024.1"/>
    <property type="molecule type" value="mRNA"/>
</dbReference>
<dbReference type="RefSeq" id="NP_001124963.1">
    <property type="nucleotide sequence ID" value="NM_001131491.1"/>
</dbReference>
<dbReference type="SMR" id="Q5RDY3"/>
<dbReference type="FunCoup" id="Q5RDY3">
    <property type="interactions" value="2261"/>
</dbReference>
<dbReference type="STRING" id="9601.ENSPPYP00000019790"/>
<dbReference type="GeneID" id="100171836"/>
<dbReference type="KEGG" id="pon:100171836"/>
<dbReference type="CTD" id="25948"/>
<dbReference type="eggNOG" id="KOG4441">
    <property type="taxonomic scope" value="Eukaryota"/>
</dbReference>
<dbReference type="InParanoid" id="Q5RDY3"/>
<dbReference type="OrthoDB" id="6359816at2759"/>
<dbReference type="UniPathway" id="UPA00143"/>
<dbReference type="Proteomes" id="UP000001595">
    <property type="component" value="Unplaced"/>
</dbReference>
<dbReference type="GO" id="GO:0016567">
    <property type="term" value="P:protein ubiquitination"/>
    <property type="evidence" value="ECO:0007669"/>
    <property type="project" value="UniProtKB-UniPathway"/>
</dbReference>
<dbReference type="CDD" id="cd18479">
    <property type="entry name" value="BACK_KBTBD2"/>
    <property type="match status" value="1"/>
</dbReference>
<dbReference type="CDD" id="cd18270">
    <property type="entry name" value="BTB_POZ_KBTBD2_BKLHD1"/>
    <property type="match status" value="1"/>
</dbReference>
<dbReference type="FunFam" id="1.25.40.420:FF:000001">
    <property type="entry name" value="Kelch-like family member 12"/>
    <property type="match status" value="1"/>
</dbReference>
<dbReference type="Gene3D" id="1.25.40.420">
    <property type="match status" value="1"/>
</dbReference>
<dbReference type="Gene3D" id="2.120.10.80">
    <property type="entry name" value="Kelch-type beta propeller"/>
    <property type="match status" value="1"/>
</dbReference>
<dbReference type="Gene3D" id="3.30.710.10">
    <property type="entry name" value="Potassium Channel Kv1.1, Chain A"/>
    <property type="match status" value="1"/>
</dbReference>
<dbReference type="InterPro" id="IPR011705">
    <property type="entry name" value="BACK"/>
</dbReference>
<dbReference type="InterPro" id="IPR017096">
    <property type="entry name" value="BTB-kelch_protein"/>
</dbReference>
<dbReference type="InterPro" id="IPR000210">
    <property type="entry name" value="BTB/POZ_dom"/>
</dbReference>
<dbReference type="InterPro" id="IPR030586">
    <property type="entry name" value="BTB_POZ_KBTBD2"/>
</dbReference>
<dbReference type="InterPro" id="IPR047074">
    <property type="entry name" value="KBTBD2_BACK"/>
</dbReference>
<dbReference type="InterPro" id="IPR015915">
    <property type="entry name" value="Kelch-typ_b-propeller"/>
</dbReference>
<dbReference type="InterPro" id="IPR006652">
    <property type="entry name" value="Kelch_1"/>
</dbReference>
<dbReference type="InterPro" id="IPR011333">
    <property type="entry name" value="SKP1/BTB/POZ_sf"/>
</dbReference>
<dbReference type="PANTHER" id="PTHR45632:SF5">
    <property type="entry name" value="KELCH-LIKE PROTEIN 22"/>
    <property type="match status" value="1"/>
</dbReference>
<dbReference type="PANTHER" id="PTHR45632">
    <property type="entry name" value="LD33804P"/>
    <property type="match status" value="1"/>
</dbReference>
<dbReference type="Pfam" id="PF07707">
    <property type="entry name" value="BACK"/>
    <property type="match status" value="1"/>
</dbReference>
<dbReference type="Pfam" id="PF00651">
    <property type="entry name" value="BTB"/>
    <property type="match status" value="1"/>
</dbReference>
<dbReference type="Pfam" id="PF01344">
    <property type="entry name" value="Kelch_1"/>
    <property type="match status" value="1"/>
</dbReference>
<dbReference type="PIRSF" id="PIRSF037037">
    <property type="entry name" value="Kelch-like_protein_gigaxonin"/>
    <property type="match status" value="1"/>
</dbReference>
<dbReference type="SMART" id="SM00875">
    <property type="entry name" value="BACK"/>
    <property type="match status" value="1"/>
</dbReference>
<dbReference type="SMART" id="SM00225">
    <property type="entry name" value="BTB"/>
    <property type="match status" value="1"/>
</dbReference>
<dbReference type="SMART" id="SM00612">
    <property type="entry name" value="Kelch"/>
    <property type="match status" value="4"/>
</dbReference>
<dbReference type="SUPFAM" id="SSF117281">
    <property type="entry name" value="Kelch motif"/>
    <property type="match status" value="1"/>
</dbReference>
<dbReference type="SUPFAM" id="SSF54695">
    <property type="entry name" value="POZ domain"/>
    <property type="match status" value="1"/>
</dbReference>
<dbReference type="PROSITE" id="PS50097">
    <property type="entry name" value="BTB"/>
    <property type="match status" value="1"/>
</dbReference>
<comment type="function">
    <text evidence="1">Substrate-specific adapter of a BCR (BTB-CUL3-RBX1) E3 ubiquitin ligase complex that acts as a regulator of the insulin signaling pathway, modulating insulin sensitivity by limiting PIK3R1/p85alpha abundance in adipocytes. Targets PIK3R1, the regulatory subunit of phosphatidylinositol 3-kinase (PI3K), for 'Lys-48'-linked polyubiquitination and proteasome-mediated degradation.</text>
</comment>
<comment type="pathway">
    <text evidence="1">Protein modification; protein ubiquitination.</text>
</comment>
<comment type="subunit">
    <text evidence="1">Component of the BCR(KBTBD2) E3 ubiquitin ligase complex, at least composed of CUL3, KBTBD2 and RBX1. Interacts (via the BTB domain) with CUL3.</text>
</comment>
<comment type="domain">
    <text evidence="1">Recognizes the BCR (BTB-CUL3-RBX1) E3 ubiquitin ligase complex substrate, PIK3R1, through the 4 tandem C-terminal Kelch domains.</text>
</comment>
<evidence type="ECO:0000250" key="1">
    <source>
        <dbReference type="UniProtKB" id="G3X9X1"/>
    </source>
</evidence>
<evidence type="ECO:0000250" key="2">
    <source>
        <dbReference type="UniProtKB" id="Q8IY47"/>
    </source>
</evidence>
<evidence type="ECO:0000255" key="3"/>
<evidence type="ECO:0000255" key="4">
    <source>
        <dbReference type="PROSITE-ProRule" id="PRU00037"/>
    </source>
</evidence>
<proteinExistence type="evidence at transcript level"/>
<keyword id="KW-0880">Kelch repeat</keyword>
<keyword id="KW-0597">Phosphoprotein</keyword>
<keyword id="KW-1185">Reference proteome</keyword>
<keyword id="KW-0677">Repeat</keyword>
<keyword id="KW-0833">Ubl conjugation pathway</keyword>
<protein>
    <recommendedName>
        <fullName>Kelch repeat and BTB domain-containing protein 2</fullName>
    </recommendedName>
</protein>